<dbReference type="EMBL" id="X60944">
    <property type="protein sequence ID" value="CAA43279.1"/>
    <property type="molecule type" value="Genomic_DNA"/>
</dbReference>
<dbReference type="PIR" id="S22927">
    <property type="entry name" value="S22927"/>
</dbReference>
<dbReference type="SMR" id="P29638"/>
<dbReference type="GO" id="GO:0005743">
    <property type="term" value="C:mitochondrial inner membrane"/>
    <property type="evidence" value="ECO:0007669"/>
    <property type="project" value="UniProtKB-SubCell"/>
</dbReference>
<dbReference type="GO" id="GO:0046872">
    <property type="term" value="F:metal ion binding"/>
    <property type="evidence" value="ECO:0007669"/>
    <property type="project" value="UniProtKB-KW"/>
</dbReference>
<dbReference type="GO" id="GO:0008121">
    <property type="term" value="F:ubiquinol-cytochrome-c reductase activity"/>
    <property type="evidence" value="ECO:0007669"/>
    <property type="project" value="TreeGrafter"/>
</dbReference>
<dbReference type="GO" id="GO:0006122">
    <property type="term" value="P:mitochondrial electron transport, ubiquinol to cytochrome c"/>
    <property type="evidence" value="ECO:0007669"/>
    <property type="project" value="TreeGrafter"/>
</dbReference>
<dbReference type="CDD" id="cd00290">
    <property type="entry name" value="cytochrome_b_C"/>
    <property type="match status" value="1"/>
</dbReference>
<dbReference type="CDD" id="cd00284">
    <property type="entry name" value="Cytochrome_b_N"/>
    <property type="match status" value="1"/>
</dbReference>
<dbReference type="FunFam" id="1.20.810.10:FF:000002">
    <property type="entry name" value="Cytochrome b"/>
    <property type="match status" value="1"/>
</dbReference>
<dbReference type="Gene3D" id="1.20.810.10">
    <property type="entry name" value="Cytochrome Bc1 Complex, Chain C"/>
    <property type="match status" value="1"/>
</dbReference>
<dbReference type="InterPro" id="IPR005798">
    <property type="entry name" value="Cyt_b/b6_C"/>
</dbReference>
<dbReference type="InterPro" id="IPR036150">
    <property type="entry name" value="Cyt_b/b6_C_sf"/>
</dbReference>
<dbReference type="InterPro" id="IPR005797">
    <property type="entry name" value="Cyt_b/b6_N"/>
</dbReference>
<dbReference type="InterPro" id="IPR027387">
    <property type="entry name" value="Cytb/b6-like_sf"/>
</dbReference>
<dbReference type="InterPro" id="IPR048260">
    <property type="entry name" value="Cytochrome_b_C_euk/bac"/>
</dbReference>
<dbReference type="InterPro" id="IPR048259">
    <property type="entry name" value="Cytochrome_b_N_euk/bac"/>
</dbReference>
<dbReference type="InterPro" id="IPR016174">
    <property type="entry name" value="Di-haem_cyt_TM"/>
</dbReference>
<dbReference type="PANTHER" id="PTHR19271">
    <property type="entry name" value="CYTOCHROME B"/>
    <property type="match status" value="1"/>
</dbReference>
<dbReference type="PANTHER" id="PTHR19271:SF16">
    <property type="entry name" value="CYTOCHROME B"/>
    <property type="match status" value="1"/>
</dbReference>
<dbReference type="Pfam" id="PF00032">
    <property type="entry name" value="Cytochrom_B_C"/>
    <property type="match status" value="1"/>
</dbReference>
<dbReference type="Pfam" id="PF00033">
    <property type="entry name" value="Cytochrome_B"/>
    <property type="match status" value="1"/>
</dbReference>
<dbReference type="SUPFAM" id="SSF81648">
    <property type="entry name" value="a domain/subunit of cytochrome bc1 complex (Ubiquinol-cytochrome c reductase)"/>
    <property type="match status" value="1"/>
</dbReference>
<dbReference type="SUPFAM" id="SSF81342">
    <property type="entry name" value="Transmembrane di-heme cytochromes"/>
    <property type="match status" value="1"/>
</dbReference>
<dbReference type="PROSITE" id="PS51003">
    <property type="entry name" value="CYTB_CTER"/>
    <property type="match status" value="1"/>
</dbReference>
<dbReference type="PROSITE" id="PS51002">
    <property type="entry name" value="CYTB_NTER"/>
    <property type="match status" value="1"/>
</dbReference>
<accession>P29638</accession>
<protein>
    <recommendedName>
        <fullName>Cytochrome b</fullName>
    </recommendedName>
    <alternativeName>
        <fullName>Complex III subunit 3</fullName>
    </alternativeName>
    <alternativeName>
        <fullName>Complex III subunit III</fullName>
    </alternativeName>
    <alternativeName>
        <fullName>Cytochrome b-c1 complex subunit 3</fullName>
    </alternativeName>
    <alternativeName>
        <fullName>Ubiquinol-cytochrome-c reductase complex cytochrome b subunit</fullName>
    </alternativeName>
</protein>
<geneLocation type="mitochondrion"/>
<reference key="1">
    <citation type="journal article" date="1991" name="Proc. R. Soc. B">
        <title>Mitochondrial resolution of a deep branch in the genealogical tree for perching birds.</title>
        <authorList>
            <person name="Edwards S.V."/>
            <person name="Arctander P."/>
            <person name="Wilson A.C."/>
        </authorList>
    </citation>
    <scope>NUCLEOTIDE SEQUENCE [GENOMIC DNA]</scope>
</reference>
<reference key="2">
    <citation type="journal article" date="1996" name="Proc. R. Soc. B">
        <authorList>
            <person name="Edwards S.V."/>
            <person name="Arctander P."/>
        </authorList>
    </citation>
    <scope>ERRATUM OF PUBMED:1676522</scope>
</reference>
<evidence type="ECO:0000250" key="1"/>
<evidence type="ECO:0000250" key="2">
    <source>
        <dbReference type="UniProtKB" id="P00157"/>
    </source>
</evidence>
<evidence type="ECO:0000255" key="3">
    <source>
        <dbReference type="PROSITE-ProRule" id="PRU00967"/>
    </source>
</evidence>
<evidence type="ECO:0000255" key="4">
    <source>
        <dbReference type="PROSITE-ProRule" id="PRU00968"/>
    </source>
</evidence>
<gene>
    <name type="primary">MT-CYB</name>
    <name type="synonym">COB</name>
    <name type="synonym">CYTB</name>
    <name type="synonym">MTCYB</name>
</gene>
<name>CYB_BAEIN</name>
<comment type="function">
    <text evidence="2">Component of the ubiquinol-cytochrome c reductase complex (complex III or cytochrome b-c1 complex) that is part of the mitochondrial respiratory chain. The b-c1 complex mediates electron transfer from ubiquinol to cytochrome c. Contributes to the generation of a proton gradient across the mitochondrial membrane that is then used for ATP synthesis.</text>
</comment>
<comment type="cofactor">
    <cofactor evidence="2">
        <name>heme b</name>
        <dbReference type="ChEBI" id="CHEBI:60344"/>
    </cofactor>
    <text evidence="2">Binds 2 heme b groups non-covalently.</text>
</comment>
<comment type="subunit">
    <text evidence="2">The cytochrome bc1 complex contains 11 subunits: 3 respiratory subunits (MT-CYB, CYC1 and UQCRFS1), 2 core proteins (UQCRC1 and UQCRC2) and 6 low-molecular weight proteins (UQCRH/QCR6, UQCRB/QCR7, UQCRQ/QCR8, UQCR10/QCR9, UQCR11/QCR10 and a cleavage product of UQCRFS1). This cytochrome bc1 complex then forms a dimer.</text>
</comment>
<comment type="subcellular location">
    <subcellularLocation>
        <location evidence="2">Mitochondrion inner membrane</location>
        <topology evidence="2">Multi-pass membrane protein</topology>
    </subcellularLocation>
</comment>
<comment type="miscellaneous">
    <text evidence="1">Heme 1 (or BL or b562) is low-potential and absorbs at about 562 nm, and heme 2 (or BH or b566) is high-potential and absorbs at about 566 nm.</text>
</comment>
<comment type="similarity">
    <text evidence="3 4">Belongs to the cytochrome b family.</text>
</comment>
<comment type="caution">
    <text evidence="2">The full-length protein contains only eight transmembrane helices, not nine as predicted by bioinformatics tools.</text>
</comment>
<organism>
    <name type="scientific">Baeolophus inornatus</name>
    <name type="common">Oak titmouse</name>
    <name type="synonym">Parus inornatus</name>
    <dbReference type="NCBI Taxonomy" id="142467"/>
    <lineage>
        <taxon>Eukaryota</taxon>
        <taxon>Metazoa</taxon>
        <taxon>Chordata</taxon>
        <taxon>Craniata</taxon>
        <taxon>Vertebrata</taxon>
        <taxon>Euteleostomi</taxon>
        <taxon>Archelosauria</taxon>
        <taxon>Archosauria</taxon>
        <taxon>Dinosauria</taxon>
        <taxon>Saurischia</taxon>
        <taxon>Theropoda</taxon>
        <taxon>Coelurosauria</taxon>
        <taxon>Aves</taxon>
        <taxon>Neognathae</taxon>
        <taxon>Neoaves</taxon>
        <taxon>Telluraves</taxon>
        <taxon>Australaves</taxon>
        <taxon>Passeriformes</taxon>
        <taxon>Paridae</taxon>
        <taxon>Baeolophus</taxon>
    </lineage>
</organism>
<proteinExistence type="inferred from homology"/>
<keyword id="KW-0249">Electron transport</keyword>
<keyword id="KW-0349">Heme</keyword>
<keyword id="KW-0408">Iron</keyword>
<keyword id="KW-0472">Membrane</keyword>
<keyword id="KW-0479">Metal-binding</keyword>
<keyword id="KW-0496">Mitochondrion</keyword>
<keyword id="KW-0999">Mitochondrion inner membrane</keyword>
<keyword id="KW-0679">Respiratory chain</keyword>
<keyword id="KW-0812">Transmembrane</keyword>
<keyword id="KW-1133">Transmembrane helix</keyword>
<keyword id="KW-0813">Transport</keyword>
<keyword id="KW-0830">Ubiquinone</keyword>
<sequence length="308" mass="34242">FGSLLGICLLTQIITGLLLAMHYTADTSLAFTSVAHTCRNVQFGWLIRNLHANGASFFFICIYFHIGRGIYYGSYLNKETWNIGVILLLTLMATAFVGYVLPWGQMSFWGATVITNLFSAIPYIGQTLVEWAWGGFSVDNPTLTRFFALHFLLPFVIAGLTLVHLTFLHETGSNNPLGIPSDCDKIPFHPYYSTKDILGFALMFILLVSLALFSPNSLGDPENFTPANPLSTPPHIKPEWYFLFAYAILRSIPNKLGGVLALAASVLVLFLLPLLHTSKQRSMTFRPLSQILFWALVANLLILTWVGS</sequence>
<feature type="chain" id="PRO_0000061350" description="Cytochrome b">
    <location>
        <begin position="1" status="less than"/>
        <end position="308" status="greater than"/>
    </location>
</feature>
<feature type="transmembrane region" description="Helical" evidence="2">
    <location>
        <begin position="1"/>
        <end position="21"/>
    </location>
</feature>
<feature type="transmembrane region" description="Helical" evidence="2">
    <location>
        <begin position="45"/>
        <end position="66"/>
    </location>
</feature>
<feature type="transmembrane region" description="Helical" evidence="2">
    <location>
        <begin position="81"/>
        <end position="101"/>
    </location>
</feature>
<feature type="transmembrane region" description="Helical" evidence="2">
    <location>
        <begin position="146"/>
        <end position="166"/>
    </location>
</feature>
<feature type="transmembrane region" description="Helical" evidence="2">
    <location>
        <begin position="194"/>
        <end position="214"/>
    </location>
</feature>
<feature type="transmembrane region" description="Helical" evidence="2">
    <location>
        <begin position="256"/>
        <end position="276"/>
    </location>
</feature>
<feature type="transmembrane region" description="Helical" evidence="2">
    <location>
        <begin position="288"/>
        <end position="308"/>
    </location>
</feature>
<feature type="binding site" description="axial binding residue" evidence="2">
    <location>
        <position position="51"/>
    </location>
    <ligand>
        <name>heme b</name>
        <dbReference type="ChEBI" id="CHEBI:60344"/>
        <label>b562</label>
    </ligand>
    <ligandPart>
        <name>Fe</name>
        <dbReference type="ChEBI" id="CHEBI:18248"/>
    </ligandPart>
</feature>
<feature type="binding site" description="axial binding residue" evidence="2">
    <location>
        <position position="65"/>
    </location>
    <ligand>
        <name>heme b</name>
        <dbReference type="ChEBI" id="CHEBI:60344"/>
        <label>b566</label>
    </ligand>
    <ligandPart>
        <name>Fe</name>
        <dbReference type="ChEBI" id="CHEBI:18248"/>
    </ligandPart>
</feature>
<feature type="binding site" description="axial binding residue" evidence="2">
    <location>
        <position position="150"/>
    </location>
    <ligand>
        <name>heme b</name>
        <dbReference type="ChEBI" id="CHEBI:60344"/>
        <label>b562</label>
    </ligand>
    <ligandPart>
        <name>Fe</name>
        <dbReference type="ChEBI" id="CHEBI:18248"/>
    </ligandPart>
</feature>
<feature type="binding site" description="axial binding residue" evidence="2">
    <location>
        <position position="164"/>
    </location>
    <ligand>
        <name>heme b</name>
        <dbReference type="ChEBI" id="CHEBI:60344"/>
        <label>b566</label>
    </ligand>
    <ligandPart>
        <name>Fe</name>
        <dbReference type="ChEBI" id="CHEBI:18248"/>
    </ligandPart>
</feature>
<feature type="binding site" evidence="2">
    <location>
        <position position="169"/>
    </location>
    <ligand>
        <name>a ubiquinone</name>
        <dbReference type="ChEBI" id="CHEBI:16389"/>
    </ligand>
</feature>
<feature type="non-terminal residue">
    <location>
        <position position="1"/>
    </location>
</feature>
<feature type="non-terminal residue">
    <location>
        <position position="308"/>
    </location>
</feature>